<gene>
    <name evidence="1" type="primary">bshC</name>
    <name type="ordered locus">Helmi_24320</name>
    <name type="ORF">HM1_2509</name>
</gene>
<keyword id="KW-0175">Coiled coil</keyword>
<keyword id="KW-0436">Ligase</keyword>
<keyword id="KW-1185">Reference proteome</keyword>
<accession>B0TAU6</accession>
<dbReference type="EC" id="6.-.-.-" evidence="1"/>
<dbReference type="EMBL" id="CP000930">
    <property type="protein sequence ID" value="ABZ85057.1"/>
    <property type="molecule type" value="Genomic_DNA"/>
</dbReference>
<dbReference type="RefSeq" id="WP_012283553.1">
    <property type="nucleotide sequence ID" value="NC_010337.2"/>
</dbReference>
<dbReference type="SMR" id="B0TAU6"/>
<dbReference type="STRING" id="498761.HM1_2509"/>
<dbReference type="KEGG" id="hmo:HM1_2509"/>
<dbReference type="eggNOG" id="COG4365">
    <property type="taxonomic scope" value="Bacteria"/>
</dbReference>
<dbReference type="HOGENOM" id="CLU_022249_1_0_9"/>
<dbReference type="Proteomes" id="UP000008550">
    <property type="component" value="Chromosome"/>
</dbReference>
<dbReference type="GO" id="GO:0016874">
    <property type="term" value="F:ligase activity"/>
    <property type="evidence" value="ECO:0007669"/>
    <property type="project" value="UniProtKB-UniRule"/>
</dbReference>
<dbReference type="HAMAP" id="MF_01867">
    <property type="entry name" value="BshC"/>
    <property type="match status" value="1"/>
</dbReference>
<dbReference type="InterPro" id="IPR011199">
    <property type="entry name" value="Bacillithiol_biosynth_BshC"/>
</dbReference>
<dbReference type="InterPro" id="IPR055399">
    <property type="entry name" value="CC_BshC"/>
</dbReference>
<dbReference type="InterPro" id="IPR055398">
    <property type="entry name" value="Rossmann-like_BshC"/>
</dbReference>
<dbReference type="NCBIfam" id="TIGR03998">
    <property type="entry name" value="thiol_BshC"/>
    <property type="match status" value="1"/>
</dbReference>
<dbReference type="Pfam" id="PF24850">
    <property type="entry name" value="CC_BshC"/>
    <property type="match status" value="1"/>
</dbReference>
<dbReference type="Pfam" id="PF10079">
    <property type="entry name" value="Rossmann-like_BshC"/>
    <property type="match status" value="1"/>
</dbReference>
<dbReference type="PIRSF" id="PIRSF012535">
    <property type="entry name" value="UCP012535"/>
    <property type="match status" value="1"/>
</dbReference>
<name>BSHC_HELMI</name>
<comment type="function">
    <text evidence="1">Involved in bacillithiol (BSH) biosynthesis. May catalyze the last step of the pathway, the addition of cysteine to glucosamine malate (GlcN-Mal) to generate BSH.</text>
</comment>
<comment type="similarity">
    <text evidence="1">Belongs to the BshC family.</text>
</comment>
<feature type="chain" id="PRO_0000378241" description="Putative cysteine ligase BshC">
    <location>
        <begin position="1"/>
        <end position="547"/>
    </location>
</feature>
<feature type="coiled-coil region" evidence="1">
    <location>
        <begin position="462"/>
        <end position="484"/>
    </location>
</feature>
<protein>
    <recommendedName>
        <fullName evidence="1">Putative cysteine ligase BshC</fullName>
        <ecNumber evidence="1">6.-.-.-</ecNumber>
    </recommendedName>
</protein>
<proteinExistence type="inferred from homology"/>
<evidence type="ECO:0000255" key="1">
    <source>
        <dbReference type="HAMAP-Rule" id="MF_01867"/>
    </source>
</evidence>
<sequence>MSFERTGSIFSGLAGAYVQREAHVVSLFPYAFPDENALALRARRMTATDSYPRSELSSLLEGYQRRLADLAGLEGSSNRAADQARRLAEANSLAVVTGQQAGLFTGPLYTIYKAVTCINLAKRLEAKTGQPVIPVFWVASEDHDFEEISHIKLLQGEKTVVITMTSRPDEDRFAIGHRTLPEDLAVTLESFLSHLPQSEHRLPWEETWHRLLTGPTGPHEHFAALLHKLLGPYGLVILDPLLSGLKQLPRCASFFASVLENEVSLREGLSRGVEQIRRLGYTPQVEKGPEETSLFYFHQGRRLAILRDGRGYRLRGAEITFSRDELLDLAQRQPDLFSTNVVTRPLLQDQLLPTTAYVAGPGEIAYFAAYRDVYRAMGMEMPPIVPRLSVTIIEGFVDKLLERYALSFADVPAGLEGRLREELAAQDELGIGALFEELESQVRAAYLPAVERIARWDRQMGNLAEENLDRVIAQARFLRQKVEHRHRQRCQDKRNHFRKVELHLWPGAPQERVYNIFPYLLKYGSSLIETLLEAPVEWLDSHCLFRC</sequence>
<organism>
    <name type="scientific">Heliobacterium modesticaldum (strain ATCC 51547 / Ice1)</name>
    <dbReference type="NCBI Taxonomy" id="498761"/>
    <lineage>
        <taxon>Bacteria</taxon>
        <taxon>Bacillati</taxon>
        <taxon>Bacillota</taxon>
        <taxon>Clostridia</taxon>
        <taxon>Eubacteriales</taxon>
        <taxon>Heliobacteriaceae</taxon>
        <taxon>Heliomicrobium</taxon>
    </lineage>
</organism>
<reference key="1">
    <citation type="journal article" date="2008" name="J. Bacteriol.">
        <title>The genome of Heliobacterium modesticaldum, a phototrophic representative of the Firmicutes containing the simplest photosynthetic apparatus.</title>
        <authorList>
            <person name="Sattley W.M."/>
            <person name="Madigan M.T."/>
            <person name="Swingley W.D."/>
            <person name="Cheung P.C."/>
            <person name="Clocksin K.M."/>
            <person name="Conrad A.L."/>
            <person name="Dejesa L.C."/>
            <person name="Honchak B.M."/>
            <person name="Jung D.O."/>
            <person name="Karbach L.E."/>
            <person name="Kurdoglu A."/>
            <person name="Lahiri S."/>
            <person name="Mastrian S.D."/>
            <person name="Page L.E."/>
            <person name="Taylor H.L."/>
            <person name="Wang Z.T."/>
            <person name="Raymond J."/>
            <person name="Chen M."/>
            <person name="Blankenship R.E."/>
            <person name="Touchman J.W."/>
        </authorList>
    </citation>
    <scope>NUCLEOTIDE SEQUENCE [LARGE SCALE GENOMIC DNA]</scope>
    <source>
        <strain>ATCC 51547 / Ice1</strain>
    </source>
</reference>